<protein>
    <recommendedName>
        <fullName>Cytochrome b</fullName>
    </recommendedName>
    <alternativeName>
        <fullName>Complex III subunit 3</fullName>
    </alternativeName>
    <alternativeName>
        <fullName>Complex III subunit III</fullName>
    </alternativeName>
    <alternativeName>
        <fullName>Cytochrome b-c1 complex subunit 3</fullName>
    </alternativeName>
    <alternativeName>
        <fullName>Ubiquinol-cytochrome-c reductase complex cytochrome b subunit</fullName>
    </alternativeName>
</protein>
<accession>Q5J1T5</accession>
<feature type="chain" id="PRO_0000254764" description="Cytochrome b">
    <location>
        <begin position="1"/>
        <end position="379"/>
    </location>
</feature>
<feature type="transmembrane region" description="Helical" evidence="2">
    <location>
        <begin position="33"/>
        <end position="53"/>
    </location>
</feature>
<feature type="transmembrane region" description="Helical" evidence="2">
    <location>
        <begin position="77"/>
        <end position="98"/>
    </location>
</feature>
<feature type="transmembrane region" description="Helical" evidence="2">
    <location>
        <begin position="113"/>
        <end position="133"/>
    </location>
</feature>
<feature type="transmembrane region" description="Helical" evidence="2">
    <location>
        <begin position="178"/>
        <end position="198"/>
    </location>
</feature>
<feature type="transmembrane region" description="Helical" evidence="2">
    <location>
        <begin position="226"/>
        <end position="246"/>
    </location>
</feature>
<feature type="transmembrane region" description="Helical" evidence="2">
    <location>
        <begin position="288"/>
        <end position="308"/>
    </location>
</feature>
<feature type="transmembrane region" description="Helical" evidence="2">
    <location>
        <begin position="320"/>
        <end position="340"/>
    </location>
</feature>
<feature type="transmembrane region" description="Helical" evidence="2">
    <location>
        <begin position="347"/>
        <end position="367"/>
    </location>
</feature>
<feature type="binding site" description="axial binding residue" evidence="2">
    <location>
        <position position="83"/>
    </location>
    <ligand>
        <name>heme b</name>
        <dbReference type="ChEBI" id="CHEBI:60344"/>
        <label>b562</label>
    </ligand>
    <ligandPart>
        <name>Fe</name>
        <dbReference type="ChEBI" id="CHEBI:18248"/>
    </ligandPart>
</feature>
<feature type="binding site" description="axial binding residue" evidence="2">
    <location>
        <position position="97"/>
    </location>
    <ligand>
        <name>heme b</name>
        <dbReference type="ChEBI" id="CHEBI:60344"/>
        <label>b566</label>
    </ligand>
    <ligandPart>
        <name>Fe</name>
        <dbReference type="ChEBI" id="CHEBI:18248"/>
    </ligandPart>
</feature>
<feature type="binding site" description="axial binding residue" evidence="2">
    <location>
        <position position="182"/>
    </location>
    <ligand>
        <name>heme b</name>
        <dbReference type="ChEBI" id="CHEBI:60344"/>
        <label>b562</label>
    </ligand>
    <ligandPart>
        <name>Fe</name>
        <dbReference type="ChEBI" id="CHEBI:18248"/>
    </ligandPart>
</feature>
<feature type="binding site" description="axial binding residue" evidence="2">
    <location>
        <position position="196"/>
    </location>
    <ligand>
        <name>heme b</name>
        <dbReference type="ChEBI" id="CHEBI:60344"/>
        <label>b566</label>
    </ligand>
    <ligandPart>
        <name>Fe</name>
        <dbReference type="ChEBI" id="CHEBI:18248"/>
    </ligandPart>
</feature>
<feature type="binding site" evidence="2">
    <location>
        <position position="201"/>
    </location>
    <ligand>
        <name>a ubiquinone</name>
        <dbReference type="ChEBI" id="CHEBI:16389"/>
    </ligand>
</feature>
<reference key="1">
    <citation type="journal article" date="2005" name="J. Virol.">
        <title>Evolutionary spread and recombination of porcine endogenous retroviruses in the suiformes.</title>
        <authorList>
            <person name="Niebert M."/>
            <person name="Tonjes R.R."/>
        </authorList>
    </citation>
    <scope>NUCLEOTIDE SEQUENCE [GENOMIC DNA]</scope>
</reference>
<geneLocation type="mitochondrion"/>
<comment type="function">
    <text evidence="2">Component of the ubiquinol-cytochrome c reductase complex (complex III or cytochrome b-c1 complex) that is part of the mitochondrial respiratory chain. The b-c1 complex mediates electron transfer from ubiquinol to cytochrome c. Contributes to the generation of a proton gradient across the mitochondrial membrane that is then used for ATP synthesis.</text>
</comment>
<comment type="cofactor">
    <cofactor evidence="2">
        <name>heme b</name>
        <dbReference type="ChEBI" id="CHEBI:60344"/>
    </cofactor>
    <text evidence="2">Binds 2 heme b groups non-covalently.</text>
</comment>
<comment type="subunit">
    <text evidence="2">The cytochrome bc1 complex contains 11 subunits: 3 respiratory subunits (MT-CYB, CYC1 and UQCRFS1), 2 core proteins (UQCRC1 and UQCRC2) and 6 low-molecular weight proteins (UQCRH/QCR6, UQCRB/QCR7, UQCRQ/QCR8, UQCR10/QCR9, UQCR11/QCR10 and a cleavage product of UQCRFS1). This cytochrome bc1 complex then forms a dimer.</text>
</comment>
<comment type="subcellular location">
    <subcellularLocation>
        <location evidence="2">Mitochondrion inner membrane</location>
        <topology evidence="2">Multi-pass membrane protein</topology>
    </subcellularLocation>
</comment>
<comment type="miscellaneous">
    <text evidence="1">Heme 1 (or BL or b562) is low-potential and absorbs at about 562 nm, and heme 2 (or BH or b566) is high-potential and absorbs at about 566 nm.</text>
</comment>
<comment type="similarity">
    <text evidence="3 4">Belongs to the cytochrome b family.</text>
</comment>
<comment type="caution">
    <text evidence="2">The full-length protein contains only eight transmembrane helices, not nine as predicted by bioinformatics tools.</text>
</comment>
<gene>
    <name type="primary">MT-CYB</name>
    <name type="synonym">COB</name>
    <name type="synonym">CYTB</name>
    <name type="synonym">MTCYB</name>
</gene>
<name>CYB_SUSCL</name>
<keyword id="KW-0249">Electron transport</keyword>
<keyword id="KW-0349">Heme</keyword>
<keyword id="KW-0408">Iron</keyword>
<keyword id="KW-0472">Membrane</keyword>
<keyword id="KW-0479">Metal-binding</keyword>
<keyword id="KW-0496">Mitochondrion</keyword>
<keyword id="KW-0999">Mitochondrion inner membrane</keyword>
<keyword id="KW-0679">Respiratory chain</keyword>
<keyword id="KW-0812">Transmembrane</keyword>
<keyword id="KW-1133">Transmembrane helix</keyword>
<keyword id="KW-0813">Transport</keyword>
<keyword id="KW-0830">Ubiquinone</keyword>
<dbReference type="EMBL" id="AY534298">
    <property type="protein sequence ID" value="AAT77441.1"/>
    <property type="molecule type" value="Genomic_DNA"/>
</dbReference>
<dbReference type="SMR" id="Q5J1T5"/>
<dbReference type="GO" id="GO:0005743">
    <property type="term" value="C:mitochondrial inner membrane"/>
    <property type="evidence" value="ECO:0007669"/>
    <property type="project" value="UniProtKB-SubCell"/>
</dbReference>
<dbReference type="GO" id="GO:0045275">
    <property type="term" value="C:respiratory chain complex III"/>
    <property type="evidence" value="ECO:0007669"/>
    <property type="project" value="InterPro"/>
</dbReference>
<dbReference type="GO" id="GO:0046872">
    <property type="term" value="F:metal ion binding"/>
    <property type="evidence" value="ECO:0007669"/>
    <property type="project" value="UniProtKB-KW"/>
</dbReference>
<dbReference type="GO" id="GO:0008121">
    <property type="term" value="F:ubiquinol-cytochrome-c reductase activity"/>
    <property type="evidence" value="ECO:0007669"/>
    <property type="project" value="InterPro"/>
</dbReference>
<dbReference type="GO" id="GO:0006122">
    <property type="term" value="P:mitochondrial electron transport, ubiquinol to cytochrome c"/>
    <property type="evidence" value="ECO:0007669"/>
    <property type="project" value="TreeGrafter"/>
</dbReference>
<dbReference type="CDD" id="cd00290">
    <property type="entry name" value="cytochrome_b_C"/>
    <property type="match status" value="1"/>
</dbReference>
<dbReference type="CDD" id="cd00284">
    <property type="entry name" value="Cytochrome_b_N"/>
    <property type="match status" value="1"/>
</dbReference>
<dbReference type="FunFam" id="1.20.810.10:FF:000002">
    <property type="entry name" value="Cytochrome b"/>
    <property type="match status" value="1"/>
</dbReference>
<dbReference type="Gene3D" id="1.20.810.10">
    <property type="entry name" value="Cytochrome Bc1 Complex, Chain C"/>
    <property type="match status" value="1"/>
</dbReference>
<dbReference type="InterPro" id="IPR005798">
    <property type="entry name" value="Cyt_b/b6_C"/>
</dbReference>
<dbReference type="InterPro" id="IPR036150">
    <property type="entry name" value="Cyt_b/b6_C_sf"/>
</dbReference>
<dbReference type="InterPro" id="IPR005797">
    <property type="entry name" value="Cyt_b/b6_N"/>
</dbReference>
<dbReference type="InterPro" id="IPR027387">
    <property type="entry name" value="Cytb/b6-like_sf"/>
</dbReference>
<dbReference type="InterPro" id="IPR030689">
    <property type="entry name" value="Cytochrome_b"/>
</dbReference>
<dbReference type="InterPro" id="IPR048260">
    <property type="entry name" value="Cytochrome_b_C_euk/bac"/>
</dbReference>
<dbReference type="InterPro" id="IPR048259">
    <property type="entry name" value="Cytochrome_b_N_euk/bac"/>
</dbReference>
<dbReference type="InterPro" id="IPR016174">
    <property type="entry name" value="Di-haem_cyt_TM"/>
</dbReference>
<dbReference type="PANTHER" id="PTHR19271">
    <property type="entry name" value="CYTOCHROME B"/>
    <property type="match status" value="1"/>
</dbReference>
<dbReference type="PANTHER" id="PTHR19271:SF16">
    <property type="entry name" value="CYTOCHROME B"/>
    <property type="match status" value="1"/>
</dbReference>
<dbReference type="Pfam" id="PF00032">
    <property type="entry name" value="Cytochrom_B_C"/>
    <property type="match status" value="1"/>
</dbReference>
<dbReference type="Pfam" id="PF00033">
    <property type="entry name" value="Cytochrome_B"/>
    <property type="match status" value="1"/>
</dbReference>
<dbReference type="PIRSF" id="PIRSF038885">
    <property type="entry name" value="COB"/>
    <property type="match status" value="1"/>
</dbReference>
<dbReference type="SUPFAM" id="SSF81648">
    <property type="entry name" value="a domain/subunit of cytochrome bc1 complex (Ubiquinol-cytochrome c reductase)"/>
    <property type="match status" value="1"/>
</dbReference>
<dbReference type="SUPFAM" id="SSF81342">
    <property type="entry name" value="Transmembrane di-heme cytochromes"/>
    <property type="match status" value="1"/>
</dbReference>
<dbReference type="PROSITE" id="PS51003">
    <property type="entry name" value="CYTB_CTER"/>
    <property type="match status" value="1"/>
</dbReference>
<dbReference type="PROSITE" id="PS51002">
    <property type="entry name" value="CYTB_NTER"/>
    <property type="match status" value="1"/>
</dbReference>
<evidence type="ECO:0000250" key="1"/>
<evidence type="ECO:0000250" key="2">
    <source>
        <dbReference type="UniProtKB" id="P00157"/>
    </source>
</evidence>
<evidence type="ECO:0000255" key="3">
    <source>
        <dbReference type="PROSITE-ProRule" id="PRU00967"/>
    </source>
</evidence>
<evidence type="ECO:0000255" key="4">
    <source>
        <dbReference type="PROSITE-ProRule" id="PRU00968"/>
    </source>
</evidence>
<proteinExistence type="inferred from homology"/>
<sequence length="379" mass="42846">MTNIRKSHPLMKIINNAFIDLPAPSNISSWWNFGSLLGICLIFQILTGLFLAMHYTSDTTTAFSSVTHICRDVNYGWVIRYLHANGASMFFICLFIHVGRGLYYGSYMFLETWNIGVILLFTVMATAFMGYVLPWGQMSFWGATVITNLLSAIPYIGTDLVEWIWGGFSVDKATLTRFFAFHFILPFVITALAAVHLLFLHETGSNNPTGISSDMDKIPFHPYYTLKDILGALFMMLILLILVLFSPDLLGDPDNYTPANPLNTPPHIKPEWYFLFAYAILRSIPNKLGGVLALVASILILILMPMLHTSKQRSMMFRPLSQCLFWMLVADLITLTWIGGQPVEHPFIIIGQLASILYFLIILVLMPITSIIENNLLKW</sequence>
<organism>
    <name type="scientific">Sus celebensis</name>
    <name type="common">Celebes wild boar</name>
    <name type="synonym">Sulawesi warty pig</name>
    <dbReference type="NCBI Taxonomy" id="273789"/>
    <lineage>
        <taxon>Eukaryota</taxon>
        <taxon>Metazoa</taxon>
        <taxon>Chordata</taxon>
        <taxon>Craniata</taxon>
        <taxon>Vertebrata</taxon>
        <taxon>Euteleostomi</taxon>
        <taxon>Mammalia</taxon>
        <taxon>Eutheria</taxon>
        <taxon>Laurasiatheria</taxon>
        <taxon>Artiodactyla</taxon>
        <taxon>Suina</taxon>
        <taxon>Suidae</taxon>
        <taxon>Sus</taxon>
    </lineage>
</organism>